<sequence>MIEADRLIAPISNHFKDEEVIDRAIRPKKLADYQGQDHVRDQMEIFIQAAQMRQEALDHLLIFGPPGLGKTTLANIVANEMGVNIRTTSGPVLEKAGDLAALLTNLEENDVLFIDEIHRLSPMVEEVLYPAMEDYQLDIMIGEGPAARSIKIDLPPFTLIGATTRAGSLTSPLRDRFGIVQRLEYYKVADLQHIVQRSAQCLGLSMDSEGALEVARRARGTPRIVNRLLRRVRDYAEVKGDGHICAQTADRALNMLDVDHQGFDYMDRKLLLAIMEKFSGGPVGIDNLAAAIGEEKDTIEDVLEPFLIQQGYLQRTPRGRIATDRAYLHFGIEK</sequence>
<name>RUVB_VIBC3</name>
<gene>
    <name evidence="1" type="primary">ruvB</name>
    <name type="ordered locus">VC0395_A1436</name>
    <name type="ordered locus">VC395_1960</name>
</gene>
<evidence type="ECO:0000255" key="1">
    <source>
        <dbReference type="HAMAP-Rule" id="MF_00016"/>
    </source>
</evidence>
<protein>
    <recommendedName>
        <fullName evidence="1">Holliday junction branch migration complex subunit RuvB</fullName>
        <ecNumber evidence="1">3.6.4.-</ecNumber>
    </recommendedName>
</protein>
<reference key="1">
    <citation type="submission" date="2007-03" db="EMBL/GenBank/DDBJ databases">
        <authorList>
            <person name="Heidelberg J."/>
        </authorList>
    </citation>
    <scope>NUCLEOTIDE SEQUENCE [LARGE SCALE GENOMIC DNA]</scope>
    <source>
        <strain>ATCC 39541 / Classical Ogawa 395 / O395</strain>
    </source>
</reference>
<reference key="2">
    <citation type="journal article" date="2008" name="PLoS ONE">
        <title>A recalibrated molecular clock and independent origins for the cholera pandemic clones.</title>
        <authorList>
            <person name="Feng L."/>
            <person name="Reeves P.R."/>
            <person name="Lan R."/>
            <person name="Ren Y."/>
            <person name="Gao C."/>
            <person name="Zhou Z."/>
            <person name="Ren Y."/>
            <person name="Cheng J."/>
            <person name="Wang W."/>
            <person name="Wang J."/>
            <person name="Qian W."/>
            <person name="Li D."/>
            <person name="Wang L."/>
        </authorList>
    </citation>
    <scope>NUCLEOTIDE SEQUENCE [LARGE SCALE GENOMIC DNA]</scope>
    <source>
        <strain>ATCC 39541 / Classical Ogawa 395 / O395</strain>
    </source>
</reference>
<accession>A5F760</accession>
<accession>C3M1N7</accession>
<dbReference type="EC" id="3.6.4.-" evidence="1"/>
<dbReference type="EMBL" id="CP000627">
    <property type="protein sequence ID" value="ABQ19689.1"/>
    <property type="molecule type" value="Genomic_DNA"/>
</dbReference>
<dbReference type="EMBL" id="CP001235">
    <property type="protein sequence ID" value="ACP09953.1"/>
    <property type="molecule type" value="Genomic_DNA"/>
</dbReference>
<dbReference type="RefSeq" id="WP_000568492.1">
    <property type="nucleotide sequence ID" value="NZ_JAACZH010000001.1"/>
</dbReference>
<dbReference type="SMR" id="A5F760"/>
<dbReference type="KEGG" id="vco:VC0395_A1436"/>
<dbReference type="KEGG" id="vcr:VC395_1960"/>
<dbReference type="PATRIC" id="fig|345073.21.peg.1892"/>
<dbReference type="eggNOG" id="COG2255">
    <property type="taxonomic scope" value="Bacteria"/>
</dbReference>
<dbReference type="HOGENOM" id="CLU_055599_1_0_6"/>
<dbReference type="OrthoDB" id="9804478at2"/>
<dbReference type="Proteomes" id="UP000000249">
    <property type="component" value="Chromosome 2"/>
</dbReference>
<dbReference type="GO" id="GO:0005737">
    <property type="term" value="C:cytoplasm"/>
    <property type="evidence" value="ECO:0007669"/>
    <property type="project" value="UniProtKB-SubCell"/>
</dbReference>
<dbReference type="GO" id="GO:0048476">
    <property type="term" value="C:Holliday junction resolvase complex"/>
    <property type="evidence" value="ECO:0007669"/>
    <property type="project" value="UniProtKB-UniRule"/>
</dbReference>
<dbReference type="GO" id="GO:0005524">
    <property type="term" value="F:ATP binding"/>
    <property type="evidence" value="ECO:0007669"/>
    <property type="project" value="UniProtKB-UniRule"/>
</dbReference>
<dbReference type="GO" id="GO:0016887">
    <property type="term" value="F:ATP hydrolysis activity"/>
    <property type="evidence" value="ECO:0007669"/>
    <property type="project" value="InterPro"/>
</dbReference>
<dbReference type="GO" id="GO:0000400">
    <property type="term" value="F:four-way junction DNA binding"/>
    <property type="evidence" value="ECO:0007669"/>
    <property type="project" value="UniProtKB-UniRule"/>
</dbReference>
<dbReference type="GO" id="GO:0009378">
    <property type="term" value="F:four-way junction helicase activity"/>
    <property type="evidence" value="ECO:0007669"/>
    <property type="project" value="InterPro"/>
</dbReference>
<dbReference type="GO" id="GO:0006310">
    <property type="term" value="P:DNA recombination"/>
    <property type="evidence" value="ECO:0007669"/>
    <property type="project" value="UniProtKB-UniRule"/>
</dbReference>
<dbReference type="GO" id="GO:0006281">
    <property type="term" value="P:DNA repair"/>
    <property type="evidence" value="ECO:0007669"/>
    <property type="project" value="UniProtKB-UniRule"/>
</dbReference>
<dbReference type="CDD" id="cd00009">
    <property type="entry name" value="AAA"/>
    <property type="match status" value="1"/>
</dbReference>
<dbReference type="FunFam" id="1.10.10.10:FF:000086">
    <property type="entry name" value="Holliday junction ATP-dependent DNA helicase RuvB"/>
    <property type="match status" value="1"/>
</dbReference>
<dbReference type="FunFam" id="1.10.8.60:FF:000023">
    <property type="entry name" value="Holliday junction ATP-dependent DNA helicase RuvB"/>
    <property type="match status" value="1"/>
</dbReference>
<dbReference type="FunFam" id="3.40.50.300:FF:000073">
    <property type="entry name" value="Holliday junction ATP-dependent DNA helicase RuvB"/>
    <property type="match status" value="1"/>
</dbReference>
<dbReference type="Gene3D" id="1.10.8.60">
    <property type="match status" value="1"/>
</dbReference>
<dbReference type="Gene3D" id="3.40.50.300">
    <property type="entry name" value="P-loop containing nucleotide triphosphate hydrolases"/>
    <property type="match status" value="1"/>
</dbReference>
<dbReference type="Gene3D" id="1.10.10.10">
    <property type="entry name" value="Winged helix-like DNA-binding domain superfamily/Winged helix DNA-binding domain"/>
    <property type="match status" value="1"/>
</dbReference>
<dbReference type="HAMAP" id="MF_00016">
    <property type="entry name" value="DNA_HJ_migration_RuvB"/>
    <property type="match status" value="1"/>
</dbReference>
<dbReference type="InterPro" id="IPR003593">
    <property type="entry name" value="AAA+_ATPase"/>
</dbReference>
<dbReference type="InterPro" id="IPR041445">
    <property type="entry name" value="AAA_lid_4"/>
</dbReference>
<dbReference type="InterPro" id="IPR004605">
    <property type="entry name" value="DNA_helicase_Holl-junc_RuvB"/>
</dbReference>
<dbReference type="InterPro" id="IPR027417">
    <property type="entry name" value="P-loop_NTPase"/>
</dbReference>
<dbReference type="InterPro" id="IPR008824">
    <property type="entry name" value="RuvB-like_N"/>
</dbReference>
<dbReference type="InterPro" id="IPR008823">
    <property type="entry name" value="RuvB_C"/>
</dbReference>
<dbReference type="InterPro" id="IPR036388">
    <property type="entry name" value="WH-like_DNA-bd_sf"/>
</dbReference>
<dbReference type="InterPro" id="IPR036390">
    <property type="entry name" value="WH_DNA-bd_sf"/>
</dbReference>
<dbReference type="NCBIfam" id="NF000868">
    <property type="entry name" value="PRK00080.1"/>
    <property type="match status" value="1"/>
</dbReference>
<dbReference type="NCBIfam" id="TIGR00635">
    <property type="entry name" value="ruvB"/>
    <property type="match status" value="1"/>
</dbReference>
<dbReference type="PANTHER" id="PTHR42848">
    <property type="match status" value="1"/>
</dbReference>
<dbReference type="PANTHER" id="PTHR42848:SF1">
    <property type="entry name" value="HOLLIDAY JUNCTION BRANCH MIGRATION COMPLEX SUBUNIT RUVB"/>
    <property type="match status" value="1"/>
</dbReference>
<dbReference type="Pfam" id="PF17864">
    <property type="entry name" value="AAA_lid_4"/>
    <property type="match status" value="1"/>
</dbReference>
<dbReference type="Pfam" id="PF05491">
    <property type="entry name" value="RuvB_C"/>
    <property type="match status" value="1"/>
</dbReference>
<dbReference type="Pfam" id="PF05496">
    <property type="entry name" value="RuvB_N"/>
    <property type="match status" value="1"/>
</dbReference>
<dbReference type="SMART" id="SM00382">
    <property type="entry name" value="AAA"/>
    <property type="match status" value="1"/>
</dbReference>
<dbReference type="SUPFAM" id="SSF52540">
    <property type="entry name" value="P-loop containing nucleoside triphosphate hydrolases"/>
    <property type="match status" value="1"/>
</dbReference>
<dbReference type="SUPFAM" id="SSF46785">
    <property type="entry name" value="Winged helix' DNA-binding domain"/>
    <property type="match status" value="1"/>
</dbReference>
<organism>
    <name type="scientific">Vibrio cholerae serotype O1 (strain ATCC 39541 / Classical Ogawa 395 / O395)</name>
    <dbReference type="NCBI Taxonomy" id="345073"/>
    <lineage>
        <taxon>Bacteria</taxon>
        <taxon>Pseudomonadati</taxon>
        <taxon>Pseudomonadota</taxon>
        <taxon>Gammaproteobacteria</taxon>
        <taxon>Vibrionales</taxon>
        <taxon>Vibrionaceae</taxon>
        <taxon>Vibrio</taxon>
    </lineage>
</organism>
<proteinExistence type="inferred from homology"/>
<feature type="chain" id="PRO_1000070972" description="Holliday junction branch migration complex subunit RuvB">
    <location>
        <begin position="1"/>
        <end position="334"/>
    </location>
</feature>
<feature type="region of interest" description="Large ATPase domain (RuvB-L)" evidence="1">
    <location>
        <begin position="4"/>
        <end position="186"/>
    </location>
</feature>
<feature type="region of interest" description="Small ATPAse domain (RuvB-S)" evidence="1">
    <location>
        <begin position="187"/>
        <end position="257"/>
    </location>
</feature>
<feature type="region of interest" description="Head domain (RuvB-H)" evidence="1">
    <location>
        <begin position="260"/>
        <end position="334"/>
    </location>
</feature>
<feature type="binding site" evidence="1">
    <location>
        <position position="25"/>
    </location>
    <ligand>
        <name>ATP</name>
        <dbReference type="ChEBI" id="CHEBI:30616"/>
    </ligand>
</feature>
<feature type="binding site" evidence="1">
    <location>
        <position position="26"/>
    </location>
    <ligand>
        <name>ATP</name>
        <dbReference type="ChEBI" id="CHEBI:30616"/>
    </ligand>
</feature>
<feature type="binding site" evidence="1">
    <location>
        <position position="67"/>
    </location>
    <ligand>
        <name>ATP</name>
        <dbReference type="ChEBI" id="CHEBI:30616"/>
    </ligand>
</feature>
<feature type="binding site" evidence="1">
    <location>
        <position position="70"/>
    </location>
    <ligand>
        <name>ATP</name>
        <dbReference type="ChEBI" id="CHEBI:30616"/>
    </ligand>
</feature>
<feature type="binding site" evidence="1">
    <location>
        <position position="71"/>
    </location>
    <ligand>
        <name>ATP</name>
        <dbReference type="ChEBI" id="CHEBI:30616"/>
    </ligand>
</feature>
<feature type="binding site" evidence="1">
    <location>
        <position position="71"/>
    </location>
    <ligand>
        <name>Mg(2+)</name>
        <dbReference type="ChEBI" id="CHEBI:18420"/>
    </ligand>
</feature>
<feature type="binding site" evidence="1">
    <location>
        <position position="72"/>
    </location>
    <ligand>
        <name>ATP</name>
        <dbReference type="ChEBI" id="CHEBI:30616"/>
    </ligand>
</feature>
<feature type="binding site" evidence="1">
    <location>
        <begin position="133"/>
        <end position="135"/>
    </location>
    <ligand>
        <name>ATP</name>
        <dbReference type="ChEBI" id="CHEBI:30616"/>
    </ligand>
</feature>
<feature type="binding site" evidence="1">
    <location>
        <position position="176"/>
    </location>
    <ligand>
        <name>ATP</name>
        <dbReference type="ChEBI" id="CHEBI:30616"/>
    </ligand>
</feature>
<feature type="binding site" evidence="1">
    <location>
        <position position="186"/>
    </location>
    <ligand>
        <name>ATP</name>
        <dbReference type="ChEBI" id="CHEBI:30616"/>
    </ligand>
</feature>
<feature type="binding site" evidence="1">
    <location>
        <position position="223"/>
    </location>
    <ligand>
        <name>ATP</name>
        <dbReference type="ChEBI" id="CHEBI:30616"/>
    </ligand>
</feature>
<feature type="binding site" evidence="1">
    <location>
        <position position="315"/>
    </location>
    <ligand>
        <name>DNA</name>
        <dbReference type="ChEBI" id="CHEBI:16991"/>
    </ligand>
</feature>
<feature type="binding site" evidence="1">
    <location>
        <position position="320"/>
    </location>
    <ligand>
        <name>DNA</name>
        <dbReference type="ChEBI" id="CHEBI:16991"/>
    </ligand>
</feature>
<comment type="function">
    <text evidence="1">The RuvA-RuvB-RuvC complex processes Holliday junction (HJ) DNA during genetic recombination and DNA repair, while the RuvA-RuvB complex plays an important role in the rescue of blocked DNA replication forks via replication fork reversal (RFR). RuvA specifically binds to HJ cruciform DNA, conferring on it an open structure. The RuvB hexamer acts as an ATP-dependent pump, pulling dsDNA into and through the RuvAB complex. RuvB forms 2 homohexamers on either side of HJ DNA bound by 1 or 2 RuvA tetramers; 4 subunits per hexamer contact DNA at a time. Coordinated motions by a converter formed by DNA-disengaged RuvB subunits stimulates ATP hydrolysis and nucleotide exchange. Immobilization of the converter enables RuvB to convert the ATP-contained energy into a lever motion, pulling 2 nucleotides of DNA out of the RuvA tetramer per ATP hydrolyzed, thus driving DNA branch migration. The RuvB motors rotate together with the DNA substrate, which together with the progressing nucleotide cycle form the mechanistic basis for DNA recombination by continuous HJ branch migration. Branch migration allows RuvC to scan DNA until it finds its consensus sequence, where it cleaves and resolves cruciform DNA.</text>
</comment>
<comment type="catalytic activity">
    <reaction evidence="1">
        <text>ATP + H2O = ADP + phosphate + H(+)</text>
        <dbReference type="Rhea" id="RHEA:13065"/>
        <dbReference type="ChEBI" id="CHEBI:15377"/>
        <dbReference type="ChEBI" id="CHEBI:15378"/>
        <dbReference type="ChEBI" id="CHEBI:30616"/>
        <dbReference type="ChEBI" id="CHEBI:43474"/>
        <dbReference type="ChEBI" id="CHEBI:456216"/>
    </reaction>
</comment>
<comment type="subunit">
    <text evidence="1">Homohexamer. Forms an RuvA(8)-RuvB(12)-Holliday junction (HJ) complex. HJ DNA is sandwiched between 2 RuvA tetramers; dsDNA enters through RuvA and exits via RuvB. An RuvB hexamer assembles on each DNA strand where it exits the tetramer. Each RuvB hexamer is contacted by two RuvA subunits (via domain III) on 2 adjacent RuvB subunits; this complex drives branch migration. In the full resolvosome a probable DNA-RuvA(4)-RuvB(12)-RuvC(2) complex forms which resolves the HJ.</text>
</comment>
<comment type="subcellular location">
    <subcellularLocation>
        <location evidence="1">Cytoplasm</location>
    </subcellularLocation>
</comment>
<comment type="domain">
    <text evidence="1">Has 3 domains, the large (RuvB-L) and small ATPase (RuvB-S) domains and the C-terminal head (RuvB-H) domain. The head domain binds DNA, while the ATPase domains jointly bind ATP, ADP or are empty depending on the state of the subunit in the translocation cycle. During a single DNA translocation step the structure of each domain remains the same, but their relative positions change.</text>
</comment>
<comment type="similarity">
    <text evidence="1">Belongs to the RuvB family.</text>
</comment>
<keyword id="KW-0067">ATP-binding</keyword>
<keyword id="KW-0963">Cytoplasm</keyword>
<keyword id="KW-0227">DNA damage</keyword>
<keyword id="KW-0233">DNA recombination</keyword>
<keyword id="KW-0234">DNA repair</keyword>
<keyword id="KW-0238">DNA-binding</keyword>
<keyword id="KW-0378">Hydrolase</keyword>
<keyword id="KW-0547">Nucleotide-binding</keyword>